<evidence type="ECO:0000255" key="1">
    <source>
        <dbReference type="HAMAP-Rule" id="MF_01333"/>
    </source>
</evidence>
<evidence type="ECO:0000305" key="2"/>
<reference key="1">
    <citation type="submission" date="2009-01" db="EMBL/GenBank/DDBJ databases">
        <title>Complete sequence of Geobacter sp. FRC-32.</title>
        <authorList>
            <consortium name="US DOE Joint Genome Institute"/>
            <person name="Lucas S."/>
            <person name="Copeland A."/>
            <person name="Lapidus A."/>
            <person name="Glavina del Rio T."/>
            <person name="Dalin E."/>
            <person name="Tice H."/>
            <person name="Bruce D."/>
            <person name="Goodwin L."/>
            <person name="Pitluck S."/>
            <person name="Saunders E."/>
            <person name="Brettin T."/>
            <person name="Detter J.C."/>
            <person name="Han C."/>
            <person name="Larimer F."/>
            <person name="Land M."/>
            <person name="Hauser L."/>
            <person name="Kyrpides N."/>
            <person name="Ovchinnikova G."/>
            <person name="Kostka J."/>
            <person name="Richardson P."/>
        </authorList>
    </citation>
    <scope>NUCLEOTIDE SEQUENCE [LARGE SCALE GENOMIC DNA]</scope>
    <source>
        <strain>DSM 22248 / JCM 15807 / FRC-32</strain>
    </source>
</reference>
<proteinExistence type="inferred from homology"/>
<gene>
    <name evidence="1" type="primary">rplE</name>
    <name type="ordered locus">Geob_3613</name>
</gene>
<dbReference type="EMBL" id="CP001390">
    <property type="protein sequence ID" value="ACM21954.1"/>
    <property type="molecule type" value="Genomic_DNA"/>
</dbReference>
<dbReference type="RefSeq" id="WP_012648682.1">
    <property type="nucleotide sequence ID" value="NC_011979.1"/>
</dbReference>
<dbReference type="SMR" id="B9M6G6"/>
<dbReference type="STRING" id="316067.Geob_3613"/>
<dbReference type="KEGG" id="geo:Geob_3613"/>
<dbReference type="eggNOG" id="COG0094">
    <property type="taxonomic scope" value="Bacteria"/>
</dbReference>
<dbReference type="HOGENOM" id="CLU_061015_2_1_7"/>
<dbReference type="OrthoDB" id="9806626at2"/>
<dbReference type="Proteomes" id="UP000007721">
    <property type="component" value="Chromosome"/>
</dbReference>
<dbReference type="GO" id="GO:1990904">
    <property type="term" value="C:ribonucleoprotein complex"/>
    <property type="evidence" value="ECO:0007669"/>
    <property type="project" value="UniProtKB-KW"/>
</dbReference>
<dbReference type="GO" id="GO:0005840">
    <property type="term" value="C:ribosome"/>
    <property type="evidence" value="ECO:0007669"/>
    <property type="project" value="UniProtKB-KW"/>
</dbReference>
<dbReference type="GO" id="GO:0019843">
    <property type="term" value="F:rRNA binding"/>
    <property type="evidence" value="ECO:0007669"/>
    <property type="project" value="UniProtKB-UniRule"/>
</dbReference>
<dbReference type="GO" id="GO:0003735">
    <property type="term" value="F:structural constituent of ribosome"/>
    <property type="evidence" value="ECO:0007669"/>
    <property type="project" value="InterPro"/>
</dbReference>
<dbReference type="GO" id="GO:0000049">
    <property type="term" value="F:tRNA binding"/>
    <property type="evidence" value="ECO:0007669"/>
    <property type="project" value="UniProtKB-UniRule"/>
</dbReference>
<dbReference type="GO" id="GO:0006412">
    <property type="term" value="P:translation"/>
    <property type="evidence" value="ECO:0007669"/>
    <property type="project" value="UniProtKB-UniRule"/>
</dbReference>
<dbReference type="FunFam" id="3.30.1440.10:FF:000001">
    <property type="entry name" value="50S ribosomal protein L5"/>
    <property type="match status" value="1"/>
</dbReference>
<dbReference type="Gene3D" id="3.30.1440.10">
    <property type="match status" value="1"/>
</dbReference>
<dbReference type="HAMAP" id="MF_01333_B">
    <property type="entry name" value="Ribosomal_uL5_B"/>
    <property type="match status" value="1"/>
</dbReference>
<dbReference type="InterPro" id="IPR002132">
    <property type="entry name" value="Ribosomal_uL5"/>
</dbReference>
<dbReference type="InterPro" id="IPR020930">
    <property type="entry name" value="Ribosomal_uL5_bac-type"/>
</dbReference>
<dbReference type="InterPro" id="IPR031309">
    <property type="entry name" value="Ribosomal_uL5_C"/>
</dbReference>
<dbReference type="InterPro" id="IPR020929">
    <property type="entry name" value="Ribosomal_uL5_CS"/>
</dbReference>
<dbReference type="InterPro" id="IPR022803">
    <property type="entry name" value="Ribosomal_uL5_dom_sf"/>
</dbReference>
<dbReference type="InterPro" id="IPR031310">
    <property type="entry name" value="Ribosomal_uL5_N"/>
</dbReference>
<dbReference type="NCBIfam" id="NF000585">
    <property type="entry name" value="PRK00010.1"/>
    <property type="match status" value="1"/>
</dbReference>
<dbReference type="PANTHER" id="PTHR11994">
    <property type="entry name" value="60S RIBOSOMAL PROTEIN L11-RELATED"/>
    <property type="match status" value="1"/>
</dbReference>
<dbReference type="Pfam" id="PF00281">
    <property type="entry name" value="Ribosomal_L5"/>
    <property type="match status" value="1"/>
</dbReference>
<dbReference type="Pfam" id="PF00673">
    <property type="entry name" value="Ribosomal_L5_C"/>
    <property type="match status" value="1"/>
</dbReference>
<dbReference type="PIRSF" id="PIRSF002161">
    <property type="entry name" value="Ribosomal_L5"/>
    <property type="match status" value="1"/>
</dbReference>
<dbReference type="SUPFAM" id="SSF55282">
    <property type="entry name" value="RL5-like"/>
    <property type="match status" value="1"/>
</dbReference>
<dbReference type="PROSITE" id="PS00358">
    <property type="entry name" value="RIBOSOMAL_L5"/>
    <property type="match status" value="1"/>
</dbReference>
<comment type="function">
    <text evidence="1">This is one of the proteins that bind and probably mediate the attachment of the 5S RNA into the large ribosomal subunit, where it forms part of the central protuberance. In the 70S ribosome it contacts protein S13 of the 30S subunit (bridge B1b), connecting the 2 subunits; this bridge is implicated in subunit movement. Contacts the P site tRNA; the 5S rRNA and some of its associated proteins might help stabilize positioning of ribosome-bound tRNAs.</text>
</comment>
<comment type="subunit">
    <text evidence="1">Part of the 50S ribosomal subunit; part of the 5S rRNA/L5/L18/L25 subcomplex. Contacts the 5S rRNA and the P site tRNA. Forms a bridge to the 30S subunit in the 70S ribosome.</text>
</comment>
<comment type="similarity">
    <text evidence="1">Belongs to the universal ribosomal protein uL5 family.</text>
</comment>
<name>RL5_GEODF</name>
<accession>B9M6G6</accession>
<organism>
    <name type="scientific">Geotalea daltonii (strain DSM 22248 / JCM 15807 / FRC-32)</name>
    <name type="common">Geobacter daltonii</name>
    <dbReference type="NCBI Taxonomy" id="316067"/>
    <lineage>
        <taxon>Bacteria</taxon>
        <taxon>Pseudomonadati</taxon>
        <taxon>Thermodesulfobacteriota</taxon>
        <taxon>Desulfuromonadia</taxon>
        <taxon>Geobacterales</taxon>
        <taxon>Geobacteraceae</taxon>
        <taxon>Geotalea</taxon>
    </lineage>
</organism>
<sequence length="179" mass="20150">MARLNELYNKELVPQLMKDFNYRNIMQVPKLEKIVINMGLGEAIQNVKILDSAVSEMALIAGQKPVITKAKKSIAGFKLRQGMPIGCAVTLRREKMYEFLDRLINVSLPRVRDFKGISGKGFDGKGNYSLGVKEQLIFPEIDYDKIDKIKGLNITIVTSAKNDEEGKALLKLMGMPFRN</sequence>
<protein>
    <recommendedName>
        <fullName evidence="1">Large ribosomal subunit protein uL5</fullName>
    </recommendedName>
    <alternativeName>
        <fullName evidence="2">50S ribosomal protein L5</fullName>
    </alternativeName>
</protein>
<feature type="chain" id="PRO_1000166134" description="Large ribosomal subunit protein uL5">
    <location>
        <begin position="1"/>
        <end position="179"/>
    </location>
</feature>
<keyword id="KW-1185">Reference proteome</keyword>
<keyword id="KW-0687">Ribonucleoprotein</keyword>
<keyword id="KW-0689">Ribosomal protein</keyword>
<keyword id="KW-0694">RNA-binding</keyword>
<keyword id="KW-0699">rRNA-binding</keyword>
<keyword id="KW-0820">tRNA-binding</keyword>